<keyword id="KW-1003">Cell membrane</keyword>
<keyword id="KW-0342">GTP-binding</keyword>
<keyword id="KW-0449">Lipoprotein</keyword>
<keyword id="KW-0460">Magnesium</keyword>
<keyword id="KW-0472">Membrane</keyword>
<keyword id="KW-0479">Metal-binding</keyword>
<keyword id="KW-0547">Nucleotide-binding</keyword>
<keyword id="KW-0564">Palmitate</keyword>
<keyword id="KW-1185">Reference proteome</keyword>
<keyword id="KW-0732">Signal</keyword>
<keyword id="KW-0808">Transferase</keyword>
<keyword id="KW-0812">Transmembrane</keyword>
<keyword id="KW-1133">Transmembrane helix</keyword>
<dbReference type="EC" id="2.7.7.65" evidence="1"/>
<dbReference type="EMBL" id="U00096">
    <property type="protein sequence ID" value="AAC73921.1"/>
    <property type="molecule type" value="Genomic_DNA"/>
</dbReference>
<dbReference type="EMBL" id="AP009048">
    <property type="protein sequence ID" value="BAA35529.1"/>
    <property type="molecule type" value="Genomic_DNA"/>
</dbReference>
<dbReference type="PIR" id="B64821">
    <property type="entry name" value="B64821"/>
</dbReference>
<dbReference type="RefSeq" id="NP_415355.1">
    <property type="nucleotide sequence ID" value="NC_000913.3"/>
</dbReference>
<dbReference type="RefSeq" id="WP_000086904.1">
    <property type="nucleotide sequence ID" value="NZ_SSZK01000002.1"/>
</dbReference>
<dbReference type="SMR" id="P75801"/>
<dbReference type="BioGRID" id="4261104">
    <property type="interactions" value="17"/>
</dbReference>
<dbReference type="FunCoup" id="P75801">
    <property type="interactions" value="7"/>
</dbReference>
<dbReference type="STRING" id="511145.b0834"/>
<dbReference type="PaxDb" id="511145-b0834"/>
<dbReference type="EnsemblBacteria" id="AAC73921">
    <property type="protein sequence ID" value="AAC73921"/>
    <property type="gene ID" value="b0834"/>
</dbReference>
<dbReference type="GeneID" id="945463"/>
<dbReference type="KEGG" id="ecj:JW0818"/>
<dbReference type="KEGG" id="eco:b0834"/>
<dbReference type="KEGG" id="ecoc:C3026_05225"/>
<dbReference type="PATRIC" id="fig|1411691.4.peg.1444"/>
<dbReference type="EchoBASE" id="EB3250"/>
<dbReference type="eggNOG" id="COG2199">
    <property type="taxonomic scope" value="Bacteria"/>
</dbReference>
<dbReference type="HOGENOM" id="CLU_056913_0_0_6"/>
<dbReference type="InParanoid" id="P75801"/>
<dbReference type="OMA" id="YIQICAL"/>
<dbReference type="OrthoDB" id="9812260at2"/>
<dbReference type="PhylomeDB" id="P75801"/>
<dbReference type="BioCyc" id="EcoCyc:G6434-MONOMER"/>
<dbReference type="UniPathway" id="UPA00599"/>
<dbReference type="PRO" id="PR:P75801"/>
<dbReference type="Proteomes" id="UP000000625">
    <property type="component" value="Chromosome"/>
</dbReference>
<dbReference type="GO" id="GO:0005886">
    <property type="term" value="C:plasma membrane"/>
    <property type="evidence" value="ECO:0000314"/>
    <property type="project" value="EcoCyc"/>
</dbReference>
<dbReference type="GO" id="GO:0052621">
    <property type="term" value="F:diguanylate cyclase activity"/>
    <property type="evidence" value="ECO:0000318"/>
    <property type="project" value="GO_Central"/>
</dbReference>
<dbReference type="GO" id="GO:0005525">
    <property type="term" value="F:GTP binding"/>
    <property type="evidence" value="ECO:0007669"/>
    <property type="project" value="UniProtKB-KW"/>
</dbReference>
<dbReference type="GO" id="GO:0046872">
    <property type="term" value="F:metal ion binding"/>
    <property type="evidence" value="ECO:0007669"/>
    <property type="project" value="UniProtKB-KW"/>
</dbReference>
<dbReference type="GO" id="GO:0043709">
    <property type="term" value="P:cell adhesion involved in single-species biofilm formation"/>
    <property type="evidence" value="ECO:0000318"/>
    <property type="project" value="GO_Central"/>
</dbReference>
<dbReference type="GO" id="GO:1902201">
    <property type="term" value="P:negative regulation of bacterial-type flagellum-dependent cell motility"/>
    <property type="evidence" value="ECO:0000318"/>
    <property type="project" value="GO_Central"/>
</dbReference>
<dbReference type="CDD" id="cd01949">
    <property type="entry name" value="GGDEF"/>
    <property type="match status" value="1"/>
</dbReference>
<dbReference type="FunFam" id="3.30.70.270:FF:000028">
    <property type="entry name" value="Diguanylate cyclase domain protein"/>
    <property type="match status" value="1"/>
</dbReference>
<dbReference type="Gene3D" id="3.30.70.270">
    <property type="match status" value="1"/>
</dbReference>
<dbReference type="InterPro" id="IPR050469">
    <property type="entry name" value="Diguanylate_Cyclase"/>
</dbReference>
<dbReference type="InterPro" id="IPR033422">
    <property type="entry name" value="GAPES2"/>
</dbReference>
<dbReference type="InterPro" id="IPR000160">
    <property type="entry name" value="GGDEF_dom"/>
</dbReference>
<dbReference type="InterPro" id="IPR029787">
    <property type="entry name" value="Nucleotide_cyclase"/>
</dbReference>
<dbReference type="InterPro" id="IPR043128">
    <property type="entry name" value="Rev_trsase/Diguanyl_cyclase"/>
</dbReference>
<dbReference type="NCBIfam" id="TIGR00254">
    <property type="entry name" value="GGDEF"/>
    <property type="match status" value="1"/>
</dbReference>
<dbReference type="PANTHER" id="PTHR45138:SF24">
    <property type="entry name" value="DIGUANYLATE CYCLASE DGCC-RELATED"/>
    <property type="match status" value="1"/>
</dbReference>
<dbReference type="PANTHER" id="PTHR45138">
    <property type="entry name" value="REGULATORY COMPONENTS OF SENSORY TRANSDUCTION SYSTEM"/>
    <property type="match status" value="1"/>
</dbReference>
<dbReference type="Pfam" id="PF17156">
    <property type="entry name" value="GAPES2"/>
    <property type="match status" value="1"/>
</dbReference>
<dbReference type="Pfam" id="PF00990">
    <property type="entry name" value="GGDEF"/>
    <property type="match status" value="1"/>
</dbReference>
<dbReference type="SMART" id="SM00267">
    <property type="entry name" value="GGDEF"/>
    <property type="match status" value="1"/>
</dbReference>
<dbReference type="SUPFAM" id="SSF55073">
    <property type="entry name" value="Nucleotide cyclase"/>
    <property type="match status" value="1"/>
</dbReference>
<dbReference type="PROSITE" id="PS50887">
    <property type="entry name" value="GGDEF"/>
    <property type="match status" value="1"/>
</dbReference>
<dbReference type="PROSITE" id="PS51257">
    <property type="entry name" value="PROKAR_LIPOPROTEIN"/>
    <property type="match status" value="1"/>
</dbReference>
<proteinExistence type="inferred from homology"/>
<protein>
    <recommendedName>
        <fullName evidence="6">Probable diguanylate cyclase DgcI</fullName>
        <shortName evidence="6">DGC</shortName>
        <ecNumber evidence="1">2.7.7.65</ecNumber>
    </recommendedName>
    <alternativeName>
        <fullName evidence="6">Putative lipoprotein DgcI</fullName>
    </alternativeName>
</protein>
<evidence type="ECO:0000250" key="1">
    <source>
        <dbReference type="UniProtKB" id="P31129"/>
    </source>
</evidence>
<evidence type="ECO:0000255" key="2"/>
<evidence type="ECO:0000255" key="3">
    <source>
        <dbReference type="PROSITE-ProRule" id="PRU00095"/>
    </source>
</evidence>
<evidence type="ECO:0000255" key="4">
    <source>
        <dbReference type="PROSITE-ProRule" id="PRU00303"/>
    </source>
</evidence>
<evidence type="ECO:0000303" key="5">
    <source>
    </source>
</evidence>
<evidence type="ECO:0000305" key="6"/>
<sequence>MSRINKFVLTVSLLIFIMISAVACGIYTQMVKERVYSLKQSVIDTAFAVANIAEYRRSVAIDLINTLNPTEEQLLVGLRTAYADSVSPSYLYDVGPYLISSDECIQVKEFEKNYCADIMQVVKYRHVKNTGFISFDGKTFVYYLYPVTHNRSLIFLLGLERFSLLSKSLAMDSENLMFSLFKNGKPVTGDEYNAKNAIFTVSEAMEHFAYLPTGLYVFAYKKDVYLRVCTLIIFFAALVAVISGASCLYLVRRVINRGIVEKEAIINNHFERVLDGGLFFSAADVKKLYSMYNSAFLDDLTKAMGRKSFDEDLKALPEKGGYLCLFDVDKFKNINDTFGHLLGDEVLMKVVKILKSQIPVDKGKVYRFGGDEFAVIYTGGTLEELLSILKEIVHFQVGSINLSTSIGVAHSNECPTVERLKMLADERLYKSKKNGRAQISWQ</sequence>
<reference key="1">
    <citation type="journal article" date="1996" name="DNA Res.">
        <title>A 718-kb DNA sequence of the Escherichia coli K-12 genome corresponding to the 12.7-28.0 min region on the linkage map.</title>
        <authorList>
            <person name="Oshima T."/>
            <person name="Aiba H."/>
            <person name="Baba T."/>
            <person name="Fujita K."/>
            <person name="Hayashi K."/>
            <person name="Honjo A."/>
            <person name="Ikemoto K."/>
            <person name="Inada T."/>
            <person name="Itoh T."/>
            <person name="Kajihara M."/>
            <person name="Kanai K."/>
            <person name="Kashimoto K."/>
            <person name="Kimura S."/>
            <person name="Kitagawa M."/>
            <person name="Makino K."/>
            <person name="Masuda S."/>
            <person name="Miki T."/>
            <person name="Mizobuchi K."/>
            <person name="Mori H."/>
            <person name="Motomura K."/>
            <person name="Nakamura Y."/>
            <person name="Nashimoto H."/>
            <person name="Nishio Y."/>
            <person name="Saito N."/>
            <person name="Sampei G."/>
            <person name="Seki Y."/>
            <person name="Tagami H."/>
            <person name="Takemoto K."/>
            <person name="Wada C."/>
            <person name="Yamamoto Y."/>
            <person name="Yano M."/>
            <person name="Horiuchi T."/>
        </authorList>
    </citation>
    <scope>NUCLEOTIDE SEQUENCE [LARGE SCALE GENOMIC DNA]</scope>
    <source>
        <strain>K12 / W3110 / ATCC 27325 / DSM 5911</strain>
    </source>
</reference>
<reference key="2">
    <citation type="journal article" date="1997" name="Science">
        <title>The complete genome sequence of Escherichia coli K-12.</title>
        <authorList>
            <person name="Blattner F.R."/>
            <person name="Plunkett G. III"/>
            <person name="Bloch C.A."/>
            <person name="Perna N.T."/>
            <person name="Burland V."/>
            <person name="Riley M."/>
            <person name="Collado-Vides J."/>
            <person name="Glasner J.D."/>
            <person name="Rode C.K."/>
            <person name="Mayhew G.F."/>
            <person name="Gregor J."/>
            <person name="Davis N.W."/>
            <person name="Kirkpatrick H.A."/>
            <person name="Goeden M.A."/>
            <person name="Rose D.J."/>
            <person name="Mau B."/>
            <person name="Shao Y."/>
        </authorList>
    </citation>
    <scope>NUCLEOTIDE SEQUENCE [LARGE SCALE GENOMIC DNA]</scope>
    <source>
        <strain>K12 / MG1655 / ATCC 47076</strain>
    </source>
</reference>
<reference key="3">
    <citation type="journal article" date="2006" name="Mol. Syst. Biol.">
        <title>Highly accurate genome sequences of Escherichia coli K-12 strains MG1655 and W3110.</title>
        <authorList>
            <person name="Hayashi K."/>
            <person name="Morooka N."/>
            <person name="Yamamoto Y."/>
            <person name="Fujita K."/>
            <person name="Isono K."/>
            <person name="Choi S."/>
            <person name="Ohtsubo E."/>
            <person name="Baba T."/>
            <person name="Wanner B.L."/>
            <person name="Mori H."/>
            <person name="Horiuchi T."/>
        </authorList>
    </citation>
    <scope>NUCLEOTIDE SEQUENCE [LARGE SCALE GENOMIC DNA]</scope>
    <source>
        <strain>K12 / W3110 / ATCC 27325 / DSM 5911</strain>
    </source>
</reference>
<reference key="4">
    <citation type="journal article" date="2015" name="J. Bacteriol.">
        <title>Systematic nomenclature for GGDEF and EAL domain-containing cyclic di-GMP turnover proteins of Escherichia coli.</title>
        <authorList>
            <person name="Hengge R."/>
            <person name="Galperin M.Y."/>
            <person name="Ghigo J.M."/>
            <person name="Gomelsky M."/>
            <person name="Green J."/>
            <person name="Hughes K.T."/>
            <person name="Jenal U."/>
            <person name="Landini P."/>
        </authorList>
    </citation>
    <scope>NOMENCLATURE</scope>
</reference>
<name>DGCI_ECOLI</name>
<gene>
    <name evidence="5" type="primary">dgcI</name>
    <name type="synonym">yliF</name>
    <name type="ordered locus">b0834</name>
    <name type="ordered locus">JW0818</name>
</gene>
<comment type="function">
    <text evidence="1">Catalyzes the synthesis of cyclic-di-GMP (c-di-GMP) via the condensation of 2 GTP molecules.</text>
</comment>
<comment type="catalytic activity">
    <reaction evidence="1">
        <text>2 GTP = 3',3'-c-di-GMP + 2 diphosphate</text>
        <dbReference type="Rhea" id="RHEA:24898"/>
        <dbReference type="ChEBI" id="CHEBI:33019"/>
        <dbReference type="ChEBI" id="CHEBI:37565"/>
        <dbReference type="ChEBI" id="CHEBI:58805"/>
        <dbReference type="EC" id="2.7.7.65"/>
    </reaction>
</comment>
<comment type="cofactor">
    <cofactor evidence="1">
        <name>Mg(2+)</name>
        <dbReference type="ChEBI" id="CHEBI:18420"/>
    </cofactor>
    <text evidence="1">Binds 1 Mg(2+) ion per monomer.</text>
</comment>
<comment type="pathway">
    <text evidence="6">Purine metabolism; 3',5'-cyclic di-GMP biosynthesis.</text>
</comment>
<comment type="subunit">
    <text evidence="1">Homodimer.</text>
</comment>
<comment type="subcellular location">
    <subcellularLocation>
        <location evidence="4">Cell membrane</location>
        <topology evidence="4">Lipid-anchor</topology>
    </subcellularLocation>
</comment>
<accession>P75801</accession>
<feature type="signal peptide" evidence="4">
    <location>
        <begin position="1"/>
        <end position="23"/>
    </location>
</feature>
<feature type="chain" id="PRO_0000168730" description="Probable diguanylate cyclase DgcI">
    <location>
        <begin position="24"/>
        <end position="442"/>
    </location>
</feature>
<feature type="transmembrane region" description="Helical" evidence="2">
    <location>
        <begin position="231"/>
        <end position="251"/>
    </location>
</feature>
<feature type="domain" description="GGDEF" evidence="3">
    <location>
        <begin position="319"/>
        <end position="442"/>
    </location>
</feature>
<feature type="binding site" evidence="1">
    <location>
        <position position="327"/>
    </location>
    <ligand>
        <name>Mg(2+)</name>
        <dbReference type="ChEBI" id="CHEBI:18420"/>
    </ligand>
</feature>
<feature type="binding site" evidence="1">
    <location>
        <position position="335"/>
    </location>
    <ligand>
        <name>substrate</name>
    </ligand>
</feature>
<feature type="binding site" evidence="1">
    <location>
        <position position="340"/>
    </location>
    <ligand>
        <name>substrate</name>
    </ligand>
</feature>
<feature type="binding site" evidence="1">
    <location>
        <position position="344"/>
    </location>
    <ligand>
        <name>substrate</name>
    </ligand>
</feature>
<feature type="binding site" evidence="1">
    <location>
        <position position="371"/>
    </location>
    <ligand>
        <name>Mg(2+)</name>
        <dbReference type="ChEBI" id="CHEBI:18420"/>
    </ligand>
</feature>
<feature type="site" description="Transition state stabilizer" evidence="2">
    <location>
        <position position="332"/>
    </location>
</feature>
<feature type="lipid moiety-binding region" description="N-palmitoyl cysteine" evidence="4">
    <location>
        <position position="24"/>
    </location>
</feature>
<feature type="lipid moiety-binding region" description="S-diacylglycerol cysteine" evidence="4">
    <location>
        <position position="24"/>
    </location>
</feature>
<organism>
    <name type="scientific">Escherichia coli (strain K12)</name>
    <dbReference type="NCBI Taxonomy" id="83333"/>
    <lineage>
        <taxon>Bacteria</taxon>
        <taxon>Pseudomonadati</taxon>
        <taxon>Pseudomonadota</taxon>
        <taxon>Gammaproteobacteria</taxon>
        <taxon>Enterobacterales</taxon>
        <taxon>Enterobacteriaceae</taxon>
        <taxon>Escherichia</taxon>
    </lineage>
</organism>